<gene>
    <name evidence="1" type="primary">lepA</name>
    <name type="ordered locus">P9515_04811</name>
</gene>
<sequence>MTDISVSKIRNFCIIAHIDHGKSTLADRLLQDTGTVKQRDMQDQFLDSMDLERERGITIKLQAARMKYKAEDSQEYILNLIDTPGHVDFSYEVSRSLQACEGALLVVDASQGVEAQTLANVYLALENNLEIIPVLNKVDLPGADANKIKQEIEEVIGLDTSNAINCSAKTGEGIEDILEAVVSRIPHPQNEIKSPTRALIFDSYYDPYRGVIVYFRVISGSINKRDKILLMASKKHYELDEIGIMAPDEKQVDELHAGEVGYLAASIKSVADARVGDTITLFNSAAKEPLPGYKTANPMVFCGLFPTDADQYPDLRESLEKLQLSDAALKYEPETSSAMGFGFRCGFLGLLHMEIVQERLEREYDLDLIVTAPSVIYKINLNDKEQIFIDNPSTIPDPQSRESIEEPYVKMEIYSPNEFNGTLMGLCQERRGIFVDMKYITTDRVTLIYEIPLAEVVTDFFDQMKSRTQGYASMEYHLIGYRKNDLVRLDVLINSERADPLTSIVHKDKAYGIGRGLVEKLKELIPKQQFKIPIQASIGSRIIASESISALRKDVLSKCYGGDISRKKKLLKKQAKGKKRMKAMGKVDVPQEAFMAVLKLNQ</sequence>
<feature type="chain" id="PRO_1000032035" description="Elongation factor 4">
    <location>
        <begin position="1"/>
        <end position="602"/>
    </location>
</feature>
<feature type="domain" description="tr-type G">
    <location>
        <begin position="7"/>
        <end position="196"/>
    </location>
</feature>
<feature type="binding site" evidence="1">
    <location>
        <begin position="19"/>
        <end position="24"/>
    </location>
    <ligand>
        <name>GTP</name>
        <dbReference type="ChEBI" id="CHEBI:37565"/>
    </ligand>
</feature>
<feature type="binding site" evidence="1">
    <location>
        <begin position="136"/>
        <end position="139"/>
    </location>
    <ligand>
        <name>GTP</name>
        <dbReference type="ChEBI" id="CHEBI:37565"/>
    </ligand>
</feature>
<accession>A2BV79</accession>
<keyword id="KW-0997">Cell inner membrane</keyword>
<keyword id="KW-1003">Cell membrane</keyword>
<keyword id="KW-0342">GTP-binding</keyword>
<keyword id="KW-0378">Hydrolase</keyword>
<keyword id="KW-0472">Membrane</keyword>
<keyword id="KW-0547">Nucleotide-binding</keyword>
<keyword id="KW-0648">Protein biosynthesis</keyword>
<reference key="1">
    <citation type="journal article" date="2007" name="PLoS Genet.">
        <title>Patterns and implications of gene gain and loss in the evolution of Prochlorococcus.</title>
        <authorList>
            <person name="Kettler G.C."/>
            <person name="Martiny A.C."/>
            <person name="Huang K."/>
            <person name="Zucker J."/>
            <person name="Coleman M.L."/>
            <person name="Rodrigue S."/>
            <person name="Chen F."/>
            <person name="Lapidus A."/>
            <person name="Ferriera S."/>
            <person name="Johnson J."/>
            <person name="Steglich C."/>
            <person name="Church G.M."/>
            <person name="Richardson P."/>
            <person name="Chisholm S.W."/>
        </authorList>
    </citation>
    <scope>NUCLEOTIDE SEQUENCE [LARGE SCALE GENOMIC DNA]</scope>
    <source>
        <strain>MIT 9515</strain>
    </source>
</reference>
<evidence type="ECO:0000255" key="1">
    <source>
        <dbReference type="HAMAP-Rule" id="MF_00071"/>
    </source>
</evidence>
<proteinExistence type="inferred from homology"/>
<name>LEPA_PROM5</name>
<comment type="function">
    <text evidence="1">Required for accurate and efficient protein synthesis under certain stress conditions. May act as a fidelity factor of the translation reaction, by catalyzing a one-codon backward translocation of tRNAs on improperly translocated ribosomes. Back-translocation proceeds from a post-translocation (POST) complex to a pre-translocation (PRE) complex, thus giving elongation factor G a second chance to translocate the tRNAs correctly. Binds to ribosomes in a GTP-dependent manner.</text>
</comment>
<comment type="catalytic activity">
    <reaction evidence="1">
        <text>GTP + H2O = GDP + phosphate + H(+)</text>
        <dbReference type="Rhea" id="RHEA:19669"/>
        <dbReference type="ChEBI" id="CHEBI:15377"/>
        <dbReference type="ChEBI" id="CHEBI:15378"/>
        <dbReference type="ChEBI" id="CHEBI:37565"/>
        <dbReference type="ChEBI" id="CHEBI:43474"/>
        <dbReference type="ChEBI" id="CHEBI:58189"/>
        <dbReference type="EC" id="3.6.5.n1"/>
    </reaction>
</comment>
<comment type="subcellular location">
    <subcellularLocation>
        <location evidence="1">Cell inner membrane</location>
        <topology evidence="1">Peripheral membrane protein</topology>
        <orientation evidence="1">Cytoplasmic side</orientation>
    </subcellularLocation>
</comment>
<comment type="similarity">
    <text evidence="1">Belongs to the TRAFAC class translation factor GTPase superfamily. Classic translation factor GTPase family. LepA subfamily.</text>
</comment>
<protein>
    <recommendedName>
        <fullName evidence="1">Elongation factor 4</fullName>
        <shortName evidence="1">EF-4</shortName>
        <ecNumber evidence="1">3.6.5.n1</ecNumber>
    </recommendedName>
    <alternativeName>
        <fullName evidence="1">Ribosomal back-translocase LepA</fullName>
    </alternativeName>
</protein>
<organism>
    <name type="scientific">Prochlorococcus marinus (strain MIT 9515)</name>
    <dbReference type="NCBI Taxonomy" id="167542"/>
    <lineage>
        <taxon>Bacteria</taxon>
        <taxon>Bacillati</taxon>
        <taxon>Cyanobacteriota</taxon>
        <taxon>Cyanophyceae</taxon>
        <taxon>Synechococcales</taxon>
        <taxon>Prochlorococcaceae</taxon>
        <taxon>Prochlorococcus</taxon>
    </lineage>
</organism>
<dbReference type="EC" id="3.6.5.n1" evidence="1"/>
<dbReference type="EMBL" id="CP000552">
    <property type="protein sequence ID" value="ABM71690.1"/>
    <property type="molecule type" value="Genomic_DNA"/>
</dbReference>
<dbReference type="RefSeq" id="WP_011819798.1">
    <property type="nucleotide sequence ID" value="NC_008817.1"/>
</dbReference>
<dbReference type="SMR" id="A2BV79"/>
<dbReference type="STRING" id="167542.P9515_04811"/>
<dbReference type="GeneID" id="60201194"/>
<dbReference type="KEGG" id="pmc:P9515_04811"/>
<dbReference type="eggNOG" id="COG0481">
    <property type="taxonomic scope" value="Bacteria"/>
</dbReference>
<dbReference type="HOGENOM" id="CLU_009995_3_3_3"/>
<dbReference type="OrthoDB" id="580826at2"/>
<dbReference type="Proteomes" id="UP000001589">
    <property type="component" value="Chromosome"/>
</dbReference>
<dbReference type="GO" id="GO:0005886">
    <property type="term" value="C:plasma membrane"/>
    <property type="evidence" value="ECO:0007669"/>
    <property type="project" value="UniProtKB-SubCell"/>
</dbReference>
<dbReference type="GO" id="GO:0005525">
    <property type="term" value="F:GTP binding"/>
    <property type="evidence" value="ECO:0007669"/>
    <property type="project" value="UniProtKB-KW"/>
</dbReference>
<dbReference type="GO" id="GO:0003924">
    <property type="term" value="F:GTPase activity"/>
    <property type="evidence" value="ECO:0007669"/>
    <property type="project" value="InterPro"/>
</dbReference>
<dbReference type="GO" id="GO:0043022">
    <property type="term" value="F:ribosome binding"/>
    <property type="evidence" value="ECO:0007669"/>
    <property type="project" value="TreeGrafter"/>
</dbReference>
<dbReference type="GO" id="GO:0045727">
    <property type="term" value="P:positive regulation of translation"/>
    <property type="evidence" value="ECO:0007669"/>
    <property type="project" value="TreeGrafter"/>
</dbReference>
<dbReference type="GO" id="GO:0006412">
    <property type="term" value="P:translation"/>
    <property type="evidence" value="ECO:0007669"/>
    <property type="project" value="UniProtKB-KW"/>
</dbReference>
<dbReference type="CDD" id="cd03699">
    <property type="entry name" value="EF4_II"/>
    <property type="match status" value="1"/>
</dbReference>
<dbReference type="CDD" id="cd16260">
    <property type="entry name" value="EF4_III"/>
    <property type="match status" value="1"/>
</dbReference>
<dbReference type="CDD" id="cd01890">
    <property type="entry name" value="LepA"/>
    <property type="match status" value="1"/>
</dbReference>
<dbReference type="CDD" id="cd03709">
    <property type="entry name" value="lepA_C"/>
    <property type="match status" value="1"/>
</dbReference>
<dbReference type="FunFam" id="3.40.50.300:FF:000078">
    <property type="entry name" value="Elongation factor 4"/>
    <property type="match status" value="1"/>
</dbReference>
<dbReference type="FunFam" id="2.40.30.10:FF:000015">
    <property type="entry name" value="Translation factor GUF1, mitochondrial"/>
    <property type="match status" value="1"/>
</dbReference>
<dbReference type="FunFam" id="3.30.70.240:FF:000007">
    <property type="entry name" value="Translation factor GUF1, mitochondrial"/>
    <property type="match status" value="1"/>
</dbReference>
<dbReference type="FunFam" id="3.30.70.2570:FF:000001">
    <property type="entry name" value="Translation factor GUF1, mitochondrial"/>
    <property type="match status" value="1"/>
</dbReference>
<dbReference type="FunFam" id="3.30.70.870:FF:000004">
    <property type="entry name" value="Translation factor GUF1, mitochondrial"/>
    <property type="match status" value="1"/>
</dbReference>
<dbReference type="Gene3D" id="3.30.70.240">
    <property type="match status" value="1"/>
</dbReference>
<dbReference type="Gene3D" id="3.30.70.2570">
    <property type="entry name" value="Elongation factor 4, C-terminal domain"/>
    <property type="match status" value="1"/>
</dbReference>
<dbReference type="Gene3D" id="3.30.70.870">
    <property type="entry name" value="Elongation Factor G (Translational Gtpase), domain 3"/>
    <property type="match status" value="1"/>
</dbReference>
<dbReference type="Gene3D" id="3.40.50.300">
    <property type="entry name" value="P-loop containing nucleotide triphosphate hydrolases"/>
    <property type="match status" value="1"/>
</dbReference>
<dbReference type="Gene3D" id="2.40.30.10">
    <property type="entry name" value="Translation factors"/>
    <property type="match status" value="1"/>
</dbReference>
<dbReference type="HAMAP" id="MF_03138">
    <property type="entry name" value="GUFP"/>
    <property type="match status" value="1"/>
</dbReference>
<dbReference type="HAMAP" id="MF_00071">
    <property type="entry name" value="LepA"/>
    <property type="match status" value="1"/>
</dbReference>
<dbReference type="InterPro" id="IPR006297">
    <property type="entry name" value="EF-4"/>
</dbReference>
<dbReference type="InterPro" id="IPR035647">
    <property type="entry name" value="EFG_III/V"/>
</dbReference>
<dbReference type="InterPro" id="IPR000640">
    <property type="entry name" value="EFG_V-like"/>
</dbReference>
<dbReference type="InterPro" id="IPR004161">
    <property type="entry name" value="EFTu-like_2"/>
</dbReference>
<dbReference type="InterPro" id="IPR031157">
    <property type="entry name" value="G_TR_CS"/>
</dbReference>
<dbReference type="InterPro" id="IPR027518">
    <property type="entry name" value="GUFP"/>
</dbReference>
<dbReference type="InterPro" id="IPR038363">
    <property type="entry name" value="LepA_C_sf"/>
</dbReference>
<dbReference type="InterPro" id="IPR013842">
    <property type="entry name" value="LepA_CTD"/>
</dbReference>
<dbReference type="InterPro" id="IPR035654">
    <property type="entry name" value="LepA_IV"/>
</dbReference>
<dbReference type="InterPro" id="IPR027417">
    <property type="entry name" value="P-loop_NTPase"/>
</dbReference>
<dbReference type="InterPro" id="IPR005225">
    <property type="entry name" value="Small_GTP-bd"/>
</dbReference>
<dbReference type="InterPro" id="IPR000795">
    <property type="entry name" value="T_Tr_GTP-bd_dom"/>
</dbReference>
<dbReference type="InterPro" id="IPR009000">
    <property type="entry name" value="Transl_B-barrel_sf"/>
</dbReference>
<dbReference type="NCBIfam" id="TIGR01393">
    <property type="entry name" value="lepA"/>
    <property type="match status" value="1"/>
</dbReference>
<dbReference type="NCBIfam" id="TIGR00231">
    <property type="entry name" value="small_GTP"/>
    <property type="match status" value="1"/>
</dbReference>
<dbReference type="PANTHER" id="PTHR43512:SF4">
    <property type="entry name" value="TRANSLATION FACTOR GUF1 HOMOLOG, CHLOROPLASTIC"/>
    <property type="match status" value="1"/>
</dbReference>
<dbReference type="PANTHER" id="PTHR43512">
    <property type="entry name" value="TRANSLATION FACTOR GUF1-RELATED"/>
    <property type="match status" value="1"/>
</dbReference>
<dbReference type="Pfam" id="PF00679">
    <property type="entry name" value="EFG_C"/>
    <property type="match status" value="1"/>
</dbReference>
<dbReference type="Pfam" id="PF00009">
    <property type="entry name" value="GTP_EFTU"/>
    <property type="match status" value="1"/>
</dbReference>
<dbReference type="Pfam" id="PF03144">
    <property type="entry name" value="GTP_EFTU_D2"/>
    <property type="match status" value="1"/>
</dbReference>
<dbReference type="Pfam" id="PF06421">
    <property type="entry name" value="LepA_C"/>
    <property type="match status" value="1"/>
</dbReference>
<dbReference type="PRINTS" id="PR00315">
    <property type="entry name" value="ELONGATNFCT"/>
</dbReference>
<dbReference type="SMART" id="SM00838">
    <property type="entry name" value="EFG_C"/>
    <property type="match status" value="1"/>
</dbReference>
<dbReference type="SUPFAM" id="SSF54980">
    <property type="entry name" value="EF-G C-terminal domain-like"/>
    <property type="match status" value="2"/>
</dbReference>
<dbReference type="SUPFAM" id="SSF52540">
    <property type="entry name" value="P-loop containing nucleoside triphosphate hydrolases"/>
    <property type="match status" value="1"/>
</dbReference>
<dbReference type="SUPFAM" id="SSF50447">
    <property type="entry name" value="Translation proteins"/>
    <property type="match status" value="1"/>
</dbReference>
<dbReference type="PROSITE" id="PS00301">
    <property type="entry name" value="G_TR_1"/>
    <property type="match status" value="1"/>
</dbReference>
<dbReference type="PROSITE" id="PS51722">
    <property type="entry name" value="G_TR_2"/>
    <property type="match status" value="1"/>
</dbReference>